<proteinExistence type="inferred from homology"/>
<protein>
    <recommendedName>
        <fullName evidence="1">Phosphate import ATP-binding protein PstB 3</fullName>
        <ecNumber evidence="1">7.3.2.1</ecNumber>
    </recommendedName>
    <alternativeName>
        <fullName evidence="1">ABC phosphate transporter 3</fullName>
    </alternativeName>
    <alternativeName>
        <fullName evidence="1">Phosphate-transporting ATPase 3</fullName>
    </alternativeName>
</protein>
<feature type="chain" id="PRO_0000092917" description="Phosphate import ATP-binding protein PstB 3">
    <location>
        <begin position="1"/>
        <end position="271"/>
    </location>
</feature>
<feature type="domain" description="ABC transporter" evidence="1">
    <location>
        <begin position="20"/>
        <end position="266"/>
    </location>
</feature>
<feature type="binding site" evidence="1">
    <location>
        <begin position="52"/>
        <end position="59"/>
    </location>
    <ligand>
        <name>ATP</name>
        <dbReference type="ChEBI" id="CHEBI:30616"/>
    </ligand>
</feature>
<gene>
    <name evidence="1" type="primary">pstB3</name>
    <name type="ordered locus">slr1250</name>
</gene>
<accession>P73788</accession>
<organism>
    <name type="scientific">Synechocystis sp. (strain ATCC 27184 / PCC 6803 / Kazusa)</name>
    <dbReference type="NCBI Taxonomy" id="1111708"/>
    <lineage>
        <taxon>Bacteria</taxon>
        <taxon>Bacillati</taxon>
        <taxon>Cyanobacteriota</taxon>
        <taxon>Cyanophyceae</taxon>
        <taxon>Synechococcales</taxon>
        <taxon>Merismopediaceae</taxon>
        <taxon>Synechocystis</taxon>
    </lineage>
</organism>
<name>PSTB3_SYNY3</name>
<reference key="1">
    <citation type="journal article" date="1996" name="DNA Res.">
        <title>Sequence analysis of the genome of the unicellular cyanobacterium Synechocystis sp. strain PCC6803. II. Sequence determination of the entire genome and assignment of potential protein-coding regions.</title>
        <authorList>
            <person name="Kaneko T."/>
            <person name="Sato S."/>
            <person name="Kotani H."/>
            <person name="Tanaka A."/>
            <person name="Asamizu E."/>
            <person name="Nakamura Y."/>
            <person name="Miyajima N."/>
            <person name="Hirosawa M."/>
            <person name="Sugiura M."/>
            <person name="Sasamoto S."/>
            <person name="Kimura T."/>
            <person name="Hosouchi T."/>
            <person name="Matsuno A."/>
            <person name="Muraki A."/>
            <person name="Nakazaki N."/>
            <person name="Naruo K."/>
            <person name="Okumura S."/>
            <person name="Shimpo S."/>
            <person name="Takeuchi C."/>
            <person name="Wada T."/>
            <person name="Watanabe A."/>
            <person name="Yamada M."/>
            <person name="Yasuda M."/>
            <person name="Tabata S."/>
        </authorList>
    </citation>
    <scope>NUCLEOTIDE SEQUENCE [LARGE SCALE GENOMIC DNA]</scope>
    <source>
        <strain>ATCC 27184 / PCC 6803 / Kazusa</strain>
    </source>
</reference>
<evidence type="ECO:0000255" key="1">
    <source>
        <dbReference type="HAMAP-Rule" id="MF_01702"/>
    </source>
</evidence>
<comment type="function">
    <text evidence="1">Part of the ABC transporter complex PstSACB involved in phosphate import. Responsible for energy coupling to the transport system.</text>
</comment>
<comment type="catalytic activity">
    <reaction evidence="1">
        <text>phosphate(out) + ATP + H2O = ADP + 2 phosphate(in) + H(+)</text>
        <dbReference type="Rhea" id="RHEA:24440"/>
        <dbReference type="ChEBI" id="CHEBI:15377"/>
        <dbReference type="ChEBI" id="CHEBI:15378"/>
        <dbReference type="ChEBI" id="CHEBI:30616"/>
        <dbReference type="ChEBI" id="CHEBI:43474"/>
        <dbReference type="ChEBI" id="CHEBI:456216"/>
        <dbReference type="EC" id="7.3.2.1"/>
    </reaction>
</comment>
<comment type="subunit">
    <text evidence="1">The complex is composed of two ATP-binding proteins (PstB), two transmembrane proteins (PstC and PstA) and a solute-binding protein (PstS).</text>
</comment>
<comment type="subcellular location">
    <subcellularLocation>
        <location evidence="1">Cell inner membrane</location>
        <topology evidence="1">Peripheral membrane protein</topology>
    </subcellularLocation>
</comment>
<comment type="similarity">
    <text evidence="1">Belongs to the ABC transporter superfamily. Phosphate importer (TC 3.A.1.7) family.</text>
</comment>
<sequence length="271" mass="29909">MTNLSGSMPSSTAADLQPALRVEGLGFYYGTKKVLEGVTMAIPVGKVTAMIGPSGCGKSTLLKAFNRIAELEGRVKVTGKIEFFGQNIYDQKVNINSLRREIGMVFQRPNPFPTSIYDNIVYGVKLCCNVSRAELDEIVERSLTRAVLWDEVKDSLKKSALGLSGGQQQRLCIARALAVNPKVLLMDEPCSALDPISTLKIEELINSLRENVTITIVTHNMQQALRVSDYTAFFNTDESRIGQLVEFDTTQNIFSSPQETQTRDYVAGRFG</sequence>
<dbReference type="EC" id="7.3.2.1" evidence="1"/>
<dbReference type="EMBL" id="BA000022">
    <property type="protein sequence ID" value="BAA17840.1"/>
    <property type="molecule type" value="Genomic_DNA"/>
</dbReference>
<dbReference type="PIR" id="S74879">
    <property type="entry name" value="S74879"/>
</dbReference>
<dbReference type="SMR" id="P73788"/>
<dbReference type="FunCoup" id="P73788">
    <property type="interactions" value="200"/>
</dbReference>
<dbReference type="STRING" id="1148.gene:10498708"/>
<dbReference type="PaxDb" id="1148-1652922"/>
<dbReference type="EnsemblBacteria" id="BAA17840">
    <property type="protein sequence ID" value="BAA17840"/>
    <property type="gene ID" value="BAA17840"/>
</dbReference>
<dbReference type="KEGG" id="syn:slr1250"/>
<dbReference type="eggNOG" id="COG1117">
    <property type="taxonomic scope" value="Bacteria"/>
</dbReference>
<dbReference type="InParanoid" id="P73788"/>
<dbReference type="PhylomeDB" id="P73788"/>
<dbReference type="Proteomes" id="UP000001425">
    <property type="component" value="Chromosome"/>
</dbReference>
<dbReference type="GO" id="GO:0005886">
    <property type="term" value="C:plasma membrane"/>
    <property type="evidence" value="ECO:0007669"/>
    <property type="project" value="UniProtKB-SubCell"/>
</dbReference>
<dbReference type="GO" id="GO:0005524">
    <property type="term" value="F:ATP binding"/>
    <property type="evidence" value="ECO:0007669"/>
    <property type="project" value="UniProtKB-KW"/>
</dbReference>
<dbReference type="GO" id="GO:0016887">
    <property type="term" value="F:ATP hydrolysis activity"/>
    <property type="evidence" value="ECO:0007669"/>
    <property type="project" value="InterPro"/>
</dbReference>
<dbReference type="GO" id="GO:0015415">
    <property type="term" value="F:ATPase-coupled phosphate ion transmembrane transporter activity"/>
    <property type="evidence" value="ECO:0007669"/>
    <property type="project" value="UniProtKB-EC"/>
</dbReference>
<dbReference type="GO" id="GO:0035435">
    <property type="term" value="P:phosphate ion transmembrane transport"/>
    <property type="evidence" value="ECO:0007669"/>
    <property type="project" value="InterPro"/>
</dbReference>
<dbReference type="CDD" id="cd03260">
    <property type="entry name" value="ABC_PstB_phosphate_transporter"/>
    <property type="match status" value="1"/>
</dbReference>
<dbReference type="Gene3D" id="3.40.50.300">
    <property type="entry name" value="P-loop containing nucleotide triphosphate hydrolases"/>
    <property type="match status" value="1"/>
</dbReference>
<dbReference type="InterPro" id="IPR003593">
    <property type="entry name" value="AAA+_ATPase"/>
</dbReference>
<dbReference type="InterPro" id="IPR003439">
    <property type="entry name" value="ABC_transporter-like_ATP-bd"/>
</dbReference>
<dbReference type="InterPro" id="IPR017871">
    <property type="entry name" value="ABC_transporter-like_CS"/>
</dbReference>
<dbReference type="InterPro" id="IPR027417">
    <property type="entry name" value="P-loop_NTPase"/>
</dbReference>
<dbReference type="InterPro" id="IPR005670">
    <property type="entry name" value="PstB-like"/>
</dbReference>
<dbReference type="NCBIfam" id="TIGR00972">
    <property type="entry name" value="3a0107s01c2"/>
    <property type="match status" value="1"/>
</dbReference>
<dbReference type="PANTHER" id="PTHR43423">
    <property type="entry name" value="ABC TRANSPORTER I FAMILY MEMBER 17"/>
    <property type="match status" value="1"/>
</dbReference>
<dbReference type="PANTHER" id="PTHR43423:SF9">
    <property type="entry name" value="PHOSPHATE IMPORT ATP-BINDING PROTEIN PSTB 3"/>
    <property type="match status" value="1"/>
</dbReference>
<dbReference type="Pfam" id="PF00005">
    <property type="entry name" value="ABC_tran"/>
    <property type="match status" value="1"/>
</dbReference>
<dbReference type="SMART" id="SM00382">
    <property type="entry name" value="AAA"/>
    <property type="match status" value="1"/>
</dbReference>
<dbReference type="SUPFAM" id="SSF52540">
    <property type="entry name" value="P-loop containing nucleoside triphosphate hydrolases"/>
    <property type="match status" value="1"/>
</dbReference>
<dbReference type="PROSITE" id="PS00211">
    <property type="entry name" value="ABC_TRANSPORTER_1"/>
    <property type="match status" value="1"/>
</dbReference>
<dbReference type="PROSITE" id="PS50893">
    <property type="entry name" value="ABC_TRANSPORTER_2"/>
    <property type="match status" value="1"/>
</dbReference>
<dbReference type="PROSITE" id="PS51238">
    <property type="entry name" value="PSTB"/>
    <property type="match status" value="1"/>
</dbReference>
<keyword id="KW-0067">ATP-binding</keyword>
<keyword id="KW-0997">Cell inner membrane</keyword>
<keyword id="KW-1003">Cell membrane</keyword>
<keyword id="KW-0472">Membrane</keyword>
<keyword id="KW-0547">Nucleotide-binding</keyword>
<keyword id="KW-0592">Phosphate transport</keyword>
<keyword id="KW-1185">Reference proteome</keyword>
<keyword id="KW-1278">Translocase</keyword>
<keyword id="KW-0813">Transport</keyword>